<gene>
    <name evidence="1" type="primary">lpxK</name>
    <name type="ordered locus">BceJ2315_26970</name>
    <name type="ORF">BCAL2759</name>
</gene>
<comment type="function">
    <text evidence="1">Transfers the gamma-phosphate of ATP to the 4'-position of a tetraacyldisaccharide 1-phosphate intermediate (termed DS-1-P) to form tetraacyldisaccharide 1,4'-bis-phosphate (lipid IVA).</text>
</comment>
<comment type="catalytic activity">
    <reaction evidence="1">
        <text>a lipid A disaccharide + ATP = a lipid IVA + ADP + H(+)</text>
        <dbReference type="Rhea" id="RHEA:67840"/>
        <dbReference type="ChEBI" id="CHEBI:15378"/>
        <dbReference type="ChEBI" id="CHEBI:30616"/>
        <dbReference type="ChEBI" id="CHEBI:176343"/>
        <dbReference type="ChEBI" id="CHEBI:176425"/>
        <dbReference type="ChEBI" id="CHEBI:456216"/>
        <dbReference type="EC" id="2.7.1.130"/>
    </reaction>
</comment>
<comment type="pathway">
    <text evidence="1">Glycolipid biosynthesis; lipid IV(A) biosynthesis; lipid IV(A) from (3R)-3-hydroxytetradecanoyl-[acyl-carrier-protein] and UDP-N-acetyl-alpha-D-glucosamine: step 6/6.</text>
</comment>
<comment type="similarity">
    <text evidence="1">Belongs to the LpxK family.</text>
</comment>
<keyword id="KW-0067">ATP-binding</keyword>
<keyword id="KW-0418">Kinase</keyword>
<keyword id="KW-0441">Lipid A biosynthesis</keyword>
<keyword id="KW-0444">Lipid biosynthesis</keyword>
<keyword id="KW-0443">Lipid metabolism</keyword>
<keyword id="KW-0547">Nucleotide-binding</keyword>
<keyword id="KW-0808">Transferase</keyword>
<evidence type="ECO:0000255" key="1">
    <source>
        <dbReference type="HAMAP-Rule" id="MF_00409"/>
    </source>
</evidence>
<dbReference type="EC" id="2.7.1.130" evidence="1"/>
<dbReference type="EMBL" id="AM747720">
    <property type="protein sequence ID" value="CAR53059.1"/>
    <property type="molecule type" value="Genomic_DNA"/>
</dbReference>
<dbReference type="RefSeq" id="WP_006496470.1">
    <property type="nucleotide sequence ID" value="NC_011000.1"/>
</dbReference>
<dbReference type="SMR" id="B4E9F8"/>
<dbReference type="GeneID" id="56559131"/>
<dbReference type="KEGG" id="bcj:BCAL2759"/>
<dbReference type="eggNOG" id="COG1663">
    <property type="taxonomic scope" value="Bacteria"/>
</dbReference>
<dbReference type="HOGENOM" id="CLU_038816_2_0_4"/>
<dbReference type="BioCyc" id="BCEN216591:G1G1V-3057-MONOMER"/>
<dbReference type="UniPathway" id="UPA00359">
    <property type="reaction ID" value="UER00482"/>
</dbReference>
<dbReference type="Proteomes" id="UP000001035">
    <property type="component" value="Chromosome 1"/>
</dbReference>
<dbReference type="GO" id="GO:0005886">
    <property type="term" value="C:plasma membrane"/>
    <property type="evidence" value="ECO:0007669"/>
    <property type="project" value="TreeGrafter"/>
</dbReference>
<dbReference type="GO" id="GO:0005524">
    <property type="term" value="F:ATP binding"/>
    <property type="evidence" value="ECO:0007669"/>
    <property type="project" value="UniProtKB-UniRule"/>
</dbReference>
<dbReference type="GO" id="GO:0009029">
    <property type="term" value="F:tetraacyldisaccharide 4'-kinase activity"/>
    <property type="evidence" value="ECO:0007669"/>
    <property type="project" value="UniProtKB-UniRule"/>
</dbReference>
<dbReference type="GO" id="GO:0009245">
    <property type="term" value="P:lipid A biosynthetic process"/>
    <property type="evidence" value="ECO:0007669"/>
    <property type="project" value="UniProtKB-UniRule"/>
</dbReference>
<dbReference type="GO" id="GO:0009244">
    <property type="term" value="P:lipopolysaccharide core region biosynthetic process"/>
    <property type="evidence" value="ECO:0007669"/>
    <property type="project" value="TreeGrafter"/>
</dbReference>
<dbReference type="HAMAP" id="MF_00409">
    <property type="entry name" value="LpxK"/>
    <property type="match status" value="1"/>
</dbReference>
<dbReference type="InterPro" id="IPR003758">
    <property type="entry name" value="LpxK"/>
</dbReference>
<dbReference type="InterPro" id="IPR027417">
    <property type="entry name" value="P-loop_NTPase"/>
</dbReference>
<dbReference type="NCBIfam" id="TIGR00682">
    <property type="entry name" value="lpxK"/>
    <property type="match status" value="1"/>
</dbReference>
<dbReference type="PANTHER" id="PTHR42724">
    <property type="entry name" value="TETRAACYLDISACCHARIDE 4'-KINASE"/>
    <property type="match status" value="1"/>
</dbReference>
<dbReference type="PANTHER" id="PTHR42724:SF1">
    <property type="entry name" value="TETRAACYLDISACCHARIDE 4'-KINASE, MITOCHONDRIAL-RELATED"/>
    <property type="match status" value="1"/>
</dbReference>
<dbReference type="Pfam" id="PF02606">
    <property type="entry name" value="LpxK"/>
    <property type="match status" value="1"/>
</dbReference>
<dbReference type="SUPFAM" id="SSF52540">
    <property type="entry name" value="P-loop containing nucleoside triphosphate hydrolases"/>
    <property type="match status" value="1"/>
</dbReference>
<sequence length="342" mass="36252">MSAPGGPLARLEARLTREWQRRGALAWALTPFACVFGLCAALRRTAYAQGWKQPVDVGVPVVVVGNVTVGGTGKTPTVIALVDALRAAGFTPGVVSRGYGANVKAPTAVTPASRAGAAGDEPLLIARRTGAPVWVCPDRVAAAQALRAAHPDVDVIVSDDGLQHYRLARTVELVVFDHRLGGNGFLLPAGPLREPLSRHRDATLVNDPYSSALPPWPDTYALALTPGAAWHLDQPTLRRPLSQFANERVLAAAGIGAPERFFATLRAAGLAPATRALPDHYAFADNPFVDDAVDAILITEKDAVKLGASWRDARLWVVPVEAALDPRLIALVVEKLRGRSPA</sequence>
<proteinExistence type="inferred from homology"/>
<protein>
    <recommendedName>
        <fullName evidence="1">Tetraacyldisaccharide 4'-kinase</fullName>
        <ecNumber evidence="1">2.7.1.130</ecNumber>
    </recommendedName>
    <alternativeName>
        <fullName evidence="1">Lipid A 4'-kinase</fullName>
    </alternativeName>
</protein>
<reference key="1">
    <citation type="journal article" date="2009" name="J. Bacteriol.">
        <title>The genome of Burkholderia cenocepacia J2315, an epidemic pathogen of cystic fibrosis patients.</title>
        <authorList>
            <person name="Holden M.T."/>
            <person name="Seth-Smith H.M."/>
            <person name="Crossman L.C."/>
            <person name="Sebaihia M."/>
            <person name="Bentley S.D."/>
            <person name="Cerdeno-Tarraga A.M."/>
            <person name="Thomson N.R."/>
            <person name="Bason N."/>
            <person name="Quail M.A."/>
            <person name="Sharp S."/>
            <person name="Cherevach I."/>
            <person name="Churcher C."/>
            <person name="Goodhead I."/>
            <person name="Hauser H."/>
            <person name="Holroyd N."/>
            <person name="Mungall K."/>
            <person name="Scott P."/>
            <person name="Walker D."/>
            <person name="White B."/>
            <person name="Rose H."/>
            <person name="Iversen P."/>
            <person name="Mil-Homens D."/>
            <person name="Rocha E.P."/>
            <person name="Fialho A.M."/>
            <person name="Baldwin A."/>
            <person name="Dowson C."/>
            <person name="Barrell B.G."/>
            <person name="Govan J.R."/>
            <person name="Vandamme P."/>
            <person name="Hart C.A."/>
            <person name="Mahenthiralingam E."/>
            <person name="Parkhill J."/>
        </authorList>
    </citation>
    <scope>NUCLEOTIDE SEQUENCE [LARGE SCALE GENOMIC DNA]</scope>
    <source>
        <strain>ATCC BAA-245 / DSM 16553 / LMG 16656 / NCTC 13227 / J2315 / CF5610</strain>
    </source>
</reference>
<feature type="chain" id="PRO_1000191524" description="Tetraacyldisaccharide 4'-kinase">
    <location>
        <begin position="1"/>
        <end position="342"/>
    </location>
</feature>
<feature type="binding site" evidence="1">
    <location>
        <begin position="68"/>
        <end position="75"/>
    </location>
    <ligand>
        <name>ATP</name>
        <dbReference type="ChEBI" id="CHEBI:30616"/>
    </ligand>
</feature>
<name>LPXK_BURCJ</name>
<accession>B4E9F8</accession>
<organism>
    <name type="scientific">Burkholderia cenocepacia (strain ATCC BAA-245 / DSM 16553 / LMG 16656 / NCTC 13227 / J2315 / CF5610)</name>
    <name type="common">Burkholderia cepacia (strain J2315)</name>
    <dbReference type="NCBI Taxonomy" id="216591"/>
    <lineage>
        <taxon>Bacteria</taxon>
        <taxon>Pseudomonadati</taxon>
        <taxon>Pseudomonadota</taxon>
        <taxon>Betaproteobacteria</taxon>
        <taxon>Burkholderiales</taxon>
        <taxon>Burkholderiaceae</taxon>
        <taxon>Burkholderia</taxon>
        <taxon>Burkholderia cepacia complex</taxon>
    </lineage>
</organism>